<feature type="chain" id="PRO_0000316701" description="Putative phosphoenolpyruvate synthase regulatory protein">
    <location>
        <begin position="1"/>
        <end position="270"/>
    </location>
</feature>
<feature type="binding site" evidence="1">
    <location>
        <begin position="151"/>
        <end position="158"/>
    </location>
    <ligand>
        <name>ADP</name>
        <dbReference type="ChEBI" id="CHEBI:456216"/>
    </ligand>
</feature>
<organism>
    <name type="scientific">Methylobacillus flagellatus (strain ATCC 51484 / DSM 6875 / VKM B-1610 / KT)</name>
    <dbReference type="NCBI Taxonomy" id="265072"/>
    <lineage>
        <taxon>Bacteria</taxon>
        <taxon>Pseudomonadati</taxon>
        <taxon>Pseudomonadota</taxon>
        <taxon>Betaproteobacteria</taxon>
        <taxon>Nitrosomonadales</taxon>
        <taxon>Methylophilaceae</taxon>
        <taxon>Methylobacillus</taxon>
    </lineage>
</organism>
<accession>Q1GZ66</accession>
<evidence type="ECO:0000255" key="1">
    <source>
        <dbReference type="HAMAP-Rule" id="MF_01062"/>
    </source>
</evidence>
<sequence>MQKRSVFFISDGTGITAESVGHLLAHFPTVSFKHIRLPFTDSEQKVQEALLKIAETEKADGARPIVVMTLVNTDLRDMLKQSNAVHLDVFGSFVDPLAEELQEQPSRTSGIAHSVLGNSYYERIDAINFTLNHDDGMTDFGLSEAQVILVGVSRCGKTPTSLYLAMQFGIKAANYPLIPEDLERGSLPEALKKYPEKLYGLSINPERLHSVRSERRPDSHYASLDNCRREIRLAEDLMHREGISWIDSTSRSIEELSTIILQKIRVNSNH</sequence>
<keyword id="KW-0418">Kinase</keyword>
<keyword id="KW-0547">Nucleotide-binding</keyword>
<keyword id="KW-1185">Reference proteome</keyword>
<keyword id="KW-0723">Serine/threonine-protein kinase</keyword>
<keyword id="KW-0808">Transferase</keyword>
<protein>
    <recommendedName>
        <fullName evidence="1">Putative phosphoenolpyruvate synthase regulatory protein</fullName>
        <shortName evidence="1">PEP synthase regulatory protein</shortName>
        <shortName evidence="1">PSRP</shortName>
        <ecNumber evidence="1">2.7.11.33</ecNumber>
        <ecNumber evidence="1">2.7.4.28</ecNumber>
    </recommendedName>
    <alternativeName>
        <fullName evidence="1">Pyruvate, water dikinase regulatory protein</fullName>
    </alternativeName>
</protein>
<comment type="function">
    <text evidence="1">Bifunctional serine/threonine kinase and phosphorylase involved in the regulation of the phosphoenolpyruvate synthase (PEPS) by catalyzing its phosphorylation/dephosphorylation.</text>
</comment>
<comment type="catalytic activity">
    <reaction evidence="1">
        <text>[pyruvate, water dikinase] + ADP = [pyruvate, water dikinase]-phosphate + AMP + H(+)</text>
        <dbReference type="Rhea" id="RHEA:46020"/>
        <dbReference type="Rhea" id="RHEA-COMP:11425"/>
        <dbReference type="Rhea" id="RHEA-COMP:11426"/>
        <dbReference type="ChEBI" id="CHEBI:15378"/>
        <dbReference type="ChEBI" id="CHEBI:43176"/>
        <dbReference type="ChEBI" id="CHEBI:68546"/>
        <dbReference type="ChEBI" id="CHEBI:456215"/>
        <dbReference type="ChEBI" id="CHEBI:456216"/>
        <dbReference type="EC" id="2.7.11.33"/>
    </reaction>
</comment>
<comment type="catalytic activity">
    <reaction evidence="1">
        <text>[pyruvate, water dikinase]-phosphate + phosphate + H(+) = [pyruvate, water dikinase] + diphosphate</text>
        <dbReference type="Rhea" id="RHEA:48580"/>
        <dbReference type="Rhea" id="RHEA-COMP:11425"/>
        <dbReference type="Rhea" id="RHEA-COMP:11426"/>
        <dbReference type="ChEBI" id="CHEBI:15378"/>
        <dbReference type="ChEBI" id="CHEBI:33019"/>
        <dbReference type="ChEBI" id="CHEBI:43176"/>
        <dbReference type="ChEBI" id="CHEBI:43474"/>
        <dbReference type="ChEBI" id="CHEBI:68546"/>
        <dbReference type="EC" id="2.7.4.28"/>
    </reaction>
</comment>
<comment type="similarity">
    <text evidence="1">Belongs to the pyruvate, phosphate/water dikinase regulatory protein family. PSRP subfamily.</text>
</comment>
<dbReference type="EC" id="2.7.11.33" evidence="1"/>
<dbReference type="EC" id="2.7.4.28" evidence="1"/>
<dbReference type="EMBL" id="CP000284">
    <property type="protein sequence ID" value="ABE50471.1"/>
    <property type="molecule type" value="Genomic_DNA"/>
</dbReference>
<dbReference type="RefSeq" id="WP_011480425.1">
    <property type="nucleotide sequence ID" value="NC_007947.1"/>
</dbReference>
<dbReference type="SMR" id="Q1GZ66"/>
<dbReference type="STRING" id="265072.Mfla_2204"/>
<dbReference type="KEGG" id="mfa:Mfla_2204"/>
<dbReference type="eggNOG" id="COG1806">
    <property type="taxonomic scope" value="Bacteria"/>
</dbReference>
<dbReference type="HOGENOM" id="CLU_046206_1_0_4"/>
<dbReference type="OrthoDB" id="9782201at2"/>
<dbReference type="Proteomes" id="UP000002440">
    <property type="component" value="Chromosome"/>
</dbReference>
<dbReference type="GO" id="GO:0043531">
    <property type="term" value="F:ADP binding"/>
    <property type="evidence" value="ECO:0007669"/>
    <property type="project" value="UniProtKB-UniRule"/>
</dbReference>
<dbReference type="GO" id="GO:0005524">
    <property type="term" value="F:ATP binding"/>
    <property type="evidence" value="ECO:0007669"/>
    <property type="project" value="InterPro"/>
</dbReference>
<dbReference type="GO" id="GO:0016776">
    <property type="term" value="F:phosphotransferase activity, phosphate group as acceptor"/>
    <property type="evidence" value="ECO:0007669"/>
    <property type="project" value="UniProtKB-UniRule"/>
</dbReference>
<dbReference type="GO" id="GO:0004674">
    <property type="term" value="F:protein serine/threonine kinase activity"/>
    <property type="evidence" value="ECO:0007669"/>
    <property type="project" value="UniProtKB-UniRule"/>
</dbReference>
<dbReference type="HAMAP" id="MF_01062">
    <property type="entry name" value="PSRP"/>
    <property type="match status" value="1"/>
</dbReference>
<dbReference type="InterPro" id="IPR005177">
    <property type="entry name" value="Kinase-pyrophosphorylase"/>
</dbReference>
<dbReference type="InterPro" id="IPR026530">
    <property type="entry name" value="PSRP"/>
</dbReference>
<dbReference type="NCBIfam" id="NF003742">
    <property type="entry name" value="PRK05339.1"/>
    <property type="match status" value="1"/>
</dbReference>
<dbReference type="PANTHER" id="PTHR31756">
    <property type="entry name" value="PYRUVATE, PHOSPHATE DIKINASE REGULATORY PROTEIN 1, CHLOROPLASTIC"/>
    <property type="match status" value="1"/>
</dbReference>
<dbReference type="PANTHER" id="PTHR31756:SF3">
    <property type="entry name" value="PYRUVATE, PHOSPHATE DIKINASE REGULATORY PROTEIN 1, CHLOROPLASTIC"/>
    <property type="match status" value="1"/>
</dbReference>
<dbReference type="Pfam" id="PF03618">
    <property type="entry name" value="Kinase-PPPase"/>
    <property type="match status" value="1"/>
</dbReference>
<name>PSRP_METFK</name>
<gene>
    <name type="ordered locus">Mfla_2204</name>
</gene>
<proteinExistence type="inferred from homology"/>
<reference key="1">
    <citation type="submission" date="2006-03" db="EMBL/GenBank/DDBJ databases">
        <title>Complete sequence of Methylobacillus flagellatus KT.</title>
        <authorList>
            <consortium name="US DOE Joint Genome Institute"/>
            <person name="Copeland A."/>
            <person name="Lucas S."/>
            <person name="Lapidus A."/>
            <person name="Barry K."/>
            <person name="Detter J.C."/>
            <person name="Glavina del Rio T."/>
            <person name="Hammon N."/>
            <person name="Israni S."/>
            <person name="Dalin E."/>
            <person name="Tice H."/>
            <person name="Pitluck S."/>
            <person name="Brettin T."/>
            <person name="Bruce D."/>
            <person name="Han C."/>
            <person name="Tapia R."/>
            <person name="Saunders E."/>
            <person name="Gilna P."/>
            <person name="Schmutz J."/>
            <person name="Larimer F."/>
            <person name="Land M."/>
            <person name="Kyrpides N."/>
            <person name="Anderson I."/>
            <person name="Richardson P."/>
        </authorList>
    </citation>
    <scope>NUCLEOTIDE SEQUENCE [LARGE SCALE GENOMIC DNA]</scope>
    <source>
        <strain>ATCC 51484 / DSM 6875 / VKM B-1610 / KT</strain>
    </source>
</reference>